<feature type="signal peptide" evidence="4">
    <location>
        <begin position="1"/>
        <end position="24"/>
    </location>
</feature>
<feature type="chain" id="PRO_0000035325" description="Neurotoxin BtITx3" evidence="4">
    <location>
        <begin position="25"/>
        <end position="59"/>
    </location>
</feature>
<feature type="propeptide" id="PRO_0000035326" description="Removed by a carboxypeptidase" evidence="6">
    <location>
        <position position="60"/>
    </location>
</feature>
<feature type="disulfide bond" evidence="1 3">
    <location>
        <begin position="26"/>
        <end position="43"/>
    </location>
</feature>
<feature type="disulfide bond" evidence="1 3">
    <location>
        <begin position="29"/>
        <end position="50"/>
    </location>
</feature>
<feature type="disulfide bond" evidence="1 3">
    <location>
        <begin position="40"/>
        <end position="55"/>
    </location>
</feature>
<feature type="disulfide bond" evidence="1 3">
    <location>
        <begin position="44"/>
        <end position="57"/>
    </location>
</feature>
<accession>P83400</accession>
<accession>Q8T0X5</accession>
<proteinExistence type="evidence at protein level"/>
<name>CTXL3_HOTTA</name>
<protein>
    <recommendedName>
        <fullName evidence="5">Neurotoxin BtITx3</fullName>
    </recommendedName>
    <alternativeName>
        <fullName evidence="8">Neurotoxin BTChl1</fullName>
    </alternativeName>
</protein>
<keyword id="KW-1265">Chloride channel impairing toxin</keyword>
<keyword id="KW-0903">Direct protein sequencing</keyword>
<keyword id="KW-1015">Disulfide bond</keyword>
<keyword id="KW-0872">Ion channel impairing toxin</keyword>
<keyword id="KW-0960">Knottin</keyword>
<keyword id="KW-0528">Neurotoxin</keyword>
<keyword id="KW-0632">Potassium channel impairing toxin</keyword>
<keyword id="KW-0964">Secreted</keyword>
<keyword id="KW-0732">Signal</keyword>
<keyword id="KW-0800">Toxin</keyword>
<keyword id="KW-0870">Voltage-gated chloride channel impairing toxin</keyword>
<keyword id="KW-1220">Voltage-gated potassium channel impairing toxin</keyword>
<sequence length="60" mass="6564">MKFLYGTILIAFFLTVMIATHSEARCPPCFTTNPNMEADCRKCCGGRGYCASYQCICPGG</sequence>
<dbReference type="EMBL" id="AF481880">
    <property type="protein sequence ID" value="AAL87236.1"/>
    <property type="molecule type" value="mRNA"/>
</dbReference>
<dbReference type="SMR" id="P83400"/>
<dbReference type="GO" id="GO:0005576">
    <property type="term" value="C:extracellular region"/>
    <property type="evidence" value="ECO:0007669"/>
    <property type="project" value="UniProtKB-SubCell"/>
</dbReference>
<dbReference type="GO" id="GO:0017081">
    <property type="term" value="F:chloride channel regulator activity"/>
    <property type="evidence" value="ECO:0007669"/>
    <property type="project" value="UniProtKB-KW"/>
</dbReference>
<dbReference type="GO" id="GO:0015459">
    <property type="term" value="F:potassium channel regulator activity"/>
    <property type="evidence" value="ECO:0007669"/>
    <property type="project" value="UniProtKB-KW"/>
</dbReference>
<dbReference type="GO" id="GO:0090729">
    <property type="term" value="F:toxin activity"/>
    <property type="evidence" value="ECO:0007669"/>
    <property type="project" value="UniProtKB-KW"/>
</dbReference>
<dbReference type="InterPro" id="IPR036574">
    <property type="entry name" value="Scorpion_toxin-like_sf"/>
</dbReference>
<dbReference type="InterPro" id="IPR007958">
    <property type="entry name" value="Scorpion_toxinS_Cl_inh"/>
</dbReference>
<dbReference type="Pfam" id="PF05294">
    <property type="entry name" value="Toxin_5"/>
    <property type="match status" value="1"/>
</dbReference>
<dbReference type="SUPFAM" id="SSF57095">
    <property type="entry name" value="Scorpion toxin-like"/>
    <property type="match status" value="1"/>
</dbReference>
<dbReference type="PROSITE" id="PS51200">
    <property type="entry name" value="SHORT_SCORPION_CHLORIDE"/>
    <property type="match status" value="1"/>
</dbReference>
<reference key="1">
    <citation type="submission" date="2002-02" db="EMBL/GenBank/DDBJ databases">
        <title>Insect toxin from Mesobuthus tamulus.</title>
        <authorList>
            <person name="Newton K.A."/>
            <person name="Armugam A."/>
            <person name="Strong P.N."/>
            <person name="Jeyaseelan K."/>
        </authorList>
    </citation>
    <scope>NUCLEOTIDE SEQUENCE [MRNA]</scope>
    <source>
        <tissue>Telson</tissue>
    </source>
</reference>
<reference key="2">
    <citation type="journal article" date="2002" name="FEBS Lett.">
        <title>Purification and characterization of a short insect toxin from the venom of the scorpion Buthus tamulus.</title>
        <authorList>
            <person name="Dhawan R."/>
            <person name="Joseph S."/>
            <person name="Sethi A."/>
            <person name="Lala A.K."/>
        </authorList>
    </citation>
    <scope>PROTEIN SEQUENCE OF 25-59</scope>
    <scope>FUNCTION</scope>
    <scope>SUBCELLULAR LOCATION</scope>
    <scope>TOXIC DOSE</scope>
    <scope>MASS SPECTROMETRY</scope>
    <scope>BIOASSAY</scope>
    <source>
        <tissue>Venom</tissue>
    </source>
</reference>
<reference key="3">
    <citation type="journal article" date="2018" name="Nat. Struct. Mol. Biol.">
        <title>Screening, large-scale production and structure-based classification of cystine-dense peptides.</title>
        <authorList>
            <person name="Correnti C.E."/>
            <person name="Gewe M.M."/>
            <person name="Mehlin C."/>
            <person name="Bandaranayake A.D."/>
            <person name="Johnsen W.A."/>
            <person name="Rupert P.B."/>
            <person name="Brusniak M.Y."/>
            <person name="Clarke M."/>
            <person name="Burke S.E."/>
            <person name="De Van Der Schueren W."/>
            <person name="Pilat K."/>
            <person name="Turnbaugh S.M."/>
            <person name="May D."/>
            <person name="Watson A."/>
            <person name="Chan M.K."/>
            <person name="Bahl C.D."/>
            <person name="Olson J.M."/>
            <person name="Strong R.K."/>
        </authorList>
    </citation>
    <scope>FUNCTION</scope>
    <scope>SYNTHESIS OF 25-59</scope>
</reference>
<comment type="function">
    <text evidence="2 4">Toxin with unknown function in healthy organisms. On glioma cells, interacts with chloride channels (probably ClC-3/CLCN3) and MMP2 at the surface of glioma cells. This complex is then internalized via caveolae, thus inhibiting the chloride channels necessary for cell shrinkage and tumor propagation (By similarity). Has been shown to weakly inhibit Kv1.1/KCNA1, Kv1.2/KCNA2 and Kv1.3/KCNA3 voltage-gated potassium channels (PubMed:29483648). In vivo, induces contraction, severe paralysis and death in insect larva of Helicoverpa armigera (PubMed:12297317).</text>
</comment>
<comment type="subcellular location">
    <subcellularLocation>
        <location evidence="4">Secreted</location>
    </subcellularLocation>
</comment>
<comment type="tissue specificity">
    <text evidence="7">Expressed by the venom gland.</text>
</comment>
<comment type="domain">
    <text evidence="1">The presence of a 'disulfide through disulfide knot' structurally defines this protein as a knottin.</text>
</comment>
<comment type="mass spectrometry" mass="3796.5" method="MALDI" evidence="4"/>
<comment type="toxic dose">
    <text evidence="4">LD(50) is 53.1 mg/kg when injected into the thoracic region of insect larvae of H.armigera.</text>
</comment>
<comment type="similarity">
    <text evidence="3">Belongs to the short scorpion toxin superfamily. Chloride channel inhibitor family.</text>
</comment>
<evidence type="ECO:0000250" key="1">
    <source>
        <dbReference type="UniProtKB" id="P15222"/>
    </source>
</evidence>
<evidence type="ECO:0000250" key="2">
    <source>
        <dbReference type="UniProtKB" id="Q9UAD0"/>
    </source>
</evidence>
<evidence type="ECO:0000255" key="3">
    <source>
        <dbReference type="PROSITE-ProRule" id="PRU00545"/>
    </source>
</evidence>
<evidence type="ECO:0000269" key="4">
    <source>
    </source>
</evidence>
<evidence type="ECO:0000303" key="5">
    <source>
    </source>
</evidence>
<evidence type="ECO:0000305" key="6"/>
<evidence type="ECO:0000305" key="7">
    <source>
    </source>
</evidence>
<evidence type="ECO:0000312" key="8">
    <source>
        <dbReference type="EMBL" id="AAL87236.1"/>
    </source>
</evidence>
<organism>
    <name type="scientific">Hottentotta tamulus</name>
    <name type="common">Eastern Indian scorpion</name>
    <name type="synonym">Mesobuthus tamulus</name>
    <dbReference type="NCBI Taxonomy" id="34647"/>
    <lineage>
        <taxon>Eukaryota</taxon>
        <taxon>Metazoa</taxon>
        <taxon>Ecdysozoa</taxon>
        <taxon>Arthropoda</taxon>
        <taxon>Chelicerata</taxon>
        <taxon>Arachnida</taxon>
        <taxon>Scorpiones</taxon>
        <taxon>Buthida</taxon>
        <taxon>Buthoidea</taxon>
        <taxon>Buthidae</taxon>
        <taxon>Mesobuthus</taxon>
    </lineage>
</organism>